<organism>
    <name type="scientific">Phoneutria nigriventer</name>
    <name type="common">Brazilian armed spider</name>
    <name type="synonym">Ctenus nigriventer</name>
    <dbReference type="NCBI Taxonomy" id="6918"/>
    <lineage>
        <taxon>Eukaryota</taxon>
        <taxon>Metazoa</taxon>
        <taxon>Ecdysozoa</taxon>
        <taxon>Arthropoda</taxon>
        <taxon>Chelicerata</taxon>
        <taxon>Arachnida</taxon>
        <taxon>Araneae</taxon>
        <taxon>Araneomorphae</taxon>
        <taxon>Entelegynae</taxon>
        <taxon>Lycosoidea</taxon>
        <taxon>Ctenidae</taxon>
        <taxon>Phoneutria</taxon>
    </lineage>
</organism>
<feature type="signal peptide" evidence="2">
    <location>
        <begin position="1" status="less than"/>
        <end position="15"/>
    </location>
</feature>
<feature type="propeptide" id="PRO_0000284878" evidence="1">
    <location>
        <begin position="16"/>
        <end position="36"/>
    </location>
</feature>
<feature type="chain" id="PRO_0000284879" description="U10-ctenitoxin-Pn1a">
    <location>
        <begin position="38"/>
        <end position="76"/>
    </location>
</feature>
<feature type="disulfide bond" evidence="1">
    <location>
        <begin position="39"/>
        <end position="54"/>
    </location>
</feature>
<feature type="disulfide bond" evidence="1">
    <location>
        <begin position="46"/>
        <end position="59"/>
    </location>
</feature>
<feature type="disulfide bond" evidence="1">
    <location>
        <begin position="53"/>
        <end position="73"/>
    </location>
</feature>
<feature type="disulfide bond" evidence="1">
    <location>
        <begin position="61"/>
        <end position="71"/>
    </location>
</feature>
<feature type="non-terminal residue">
    <location>
        <position position="1"/>
    </location>
</feature>
<reference key="1">
    <citation type="journal article" date="2003" name="Toxicon">
        <title>Molecular cloning and characterization of Phoneutria nigriventer toxins active on calcium channels.</title>
        <authorList>
            <person name="Cardoso F.C."/>
            <person name="Pacifico L.G."/>
            <person name="Carvalho D.C."/>
            <person name="Victoria J.M.N."/>
            <person name="Neves A.L.G."/>
            <person name="Chavez-Olortegui C."/>
            <person name="Gomez M.V."/>
            <person name="Kalapothakis E."/>
        </authorList>
    </citation>
    <scope>NUCLEOTIDE SEQUENCE [MRNA]</scope>
    <source>
        <tissue>Venom gland</tissue>
    </source>
</reference>
<keyword id="KW-1015">Disulfide bond</keyword>
<keyword id="KW-0960">Knottin</keyword>
<keyword id="KW-0964">Secreted</keyword>
<keyword id="KW-0732">Signal</keyword>
<comment type="subcellular location">
    <subcellularLocation>
        <location evidence="1">Secreted</location>
    </subcellularLocation>
</comment>
<comment type="tissue specificity">
    <text>Expressed by the venom gland.</text>
</comment>
<comment type="domain">
    <text evidence="1">The presence of a 'disulfide through disulfide knot' structurally defines this protein as a knottin.</text>
</comment>
<comment type="similarity">
    <text>Belongs to the neurotoxin 02 (plectoxin) family. 09 subfamily.</text>
</comment>
<dbReference type="SMR" id="P0C2S9"/>
<dbReference type="ArachnoServer" id="AS000264">
    <property type="toxin name" value="U10-ctenitoxin-Pn1a"/>
</dbReference>
<dbReference type="GO" id="GO:0005576">
    <property type="term" value="C:extracellular region"/>
    <property type="evidence" value="ECO:0007669"/>
    <property type="project" value="UniProtKB-SubCell"/>
</dbReference>
<proteinExistence type="evidence at transcript level"/>
<evidence type="ECO:0000250" key="1"/>
<evidence type="ECO:0000255" key="2"/>
<accession>P0C2S9</accession>
<protein>
    <recommendedName>
        <fullName>U10-ctenitoxin-Pn1a</fullName>
        <shortName>U10-CNTX-Pn1a</shortName>
    </recommendedName>
    <alternativeName>
        <fullName>Neurotoxin Pn3-5A</fullName>
    </alternativeName>
</protein>
<sequence length="76" mass="8866">SFVFYLFTLITVVRAEEFILENEAEDIAPAVHGESGRECIGHRRSCKEDRNGCCRLYTCNCWYPTPGDQWCKCQLW</sequence>
<name>TX29A_PHONI</name>